<proteinExistence type="inferred from homology"/>
<gene>
    <name evidence="1" type="primary">efp</name>
    <name type="ordered locus">FTF0229c</name>
</gene>
<name>EFP_FRAT1</name>
<reference key="1">
    <citation type="journal article" date="2007" name="PLoS ONE">
        <title>Genome sequencing shows that European isolates of Francisella tularensis subspecies tularensis are almost identical to US laboratory strain Schu S4.</title>
        <authorList>
            <person name="Chaudhuri R.R."/>
            <person name="Ren C.-P."/>
            <person name="Desmond L."/>
            <person name="Vincent G.A."/>
            <person name="Silman N.J."/>
            <person name="Brehm J.K."/>
            <person name="Elmore M.J."/>
            <person name="Hudson M.J."/>
            <person name="Forsman M."/>
            <person name="Isherwood K.E."/>
            <person name="Gurycova D."/>
            <person name="Minton N.P."/>
            <person name="Titball R.W."/>
            <person name="Pallen M.J."/>
            <person name="Vipond R."/>
        </authorList>
    </citation>
    <scope>NUCLEOTIDE SEQUENCE [LARGE SCALE GENOMIC DNA]</scope>
    <source>
        <strain>FSC 198</strain>
    </source>
</reference>
<dbReference type="EMBL" id="AM286280">
    <property type="protein sequence ID" value="CAL08245.1"/>
    <property type="molecule type" value="Genomic_DNA"/>
</dbReference>
<dbReference type="RefSeq" id="WP_003014194.1">
    <property type="nucleotide sequence ID" value="NC_008245.1"/>
</dbReference>
<dbReference type="SMR" id="Q14JL2"/>
<dbReference type="KEGG" id="ftf:FTF0229c"/>
<dbReference type="HOGENOM" id="CLU_074944_0_0_6"/>
<dbReference type="UniPathway" id="UPA00345"/>
<dbReference type="GO" id="GO:0005737">
    <property type="term" value="C:cytoplasm"/>
    <property type="evidence" value="ECO:0007669"/>
    <property type="project" value="UniProtKB-SubCell"/>
</dbReference>
<dbReference type="GO" id="GO:0003746">
    <property type="term" value="F:translation elongation factor activity"/>
    <property type="evidence" value="ECO:0007669"/>
    <property type="project" value="UniProtKB-UniRule"/>
</dbReference>
<dbReference type="GO" id="GO:0043043">
    <property type="term" value="P:peptide biosynthetic process"/>
    <property type="evidence" value="ECO:0007669"/>
    <property type="project" value="InterPro"/>
</dbReference>
<dbReference type="CDD" id="cd04470">
    <property type="entry name" value="S1_EF-P_repeat_1"/>
    <property type="match status" value="1"/>
</dbReference>
<dbReference type="CDD" id="cd05794">
    <property type="entry name" value="S1_EF-P_repeat_2"/>
    <property type="match status" value="1"/>
</dbReference>
<dbReference type="FunFam" id="2.30.30.30:FF:000003">
    <property type="entry name" value="Elongation factor P"/>
    <property type="match status" value="1"/>
</dbReference>
<dbReference type="FunFam" id="2.40.50.140:FF:000004">
    <property type="entry name" value="Elongation factor P"/>
    <property type="match status" value="1"/>
</dbReference>
<dbReference type="FunFam" id="2.40.50.140:FF:000009">
    <property type="entry name" value="Elongation factor P"/>
    <property type="match status" value="1"/>
</dbReference>
<dbReference type="Gene3D" id="2.30.30.30">
    <property type="match status" value="1"/>
</dbReference>
<dbReference type="Gene3D" id="2.40.50.140">
    <property type="entry name" value="Nucleic acid-binding proteins"/>
    <property type="match status" value="2"/>
</dbReference>
<dbReference type="HAMAP" id="MF_00141">
    <property type="entry name" value="EF_P"/>
    <property type="match status" value="1"/>
</dbReference>
<dbReference type="InterPro" id="IPR015365">
    <property type="entry name" value="Elong-fact-P_C"/>
</dbReference>
<dbReference type="InterPro" id="IPR012340">
    <property type="entry name" value="NA-bd_OB-fold"/>
</dbReference>
<dbReference type="InterPro" id="IPR014722">
    <property type="entry name" value="Rib_uL2_dom2"/>
</dbReference>
<dbReference type="InterPro" id="IPR020599">
    <property type="entry name" value="Transl_elong_fac_P/YeiP"/>
</dbReference>
<dbReference type="InterPro" id="IPR013185">
    <property type="entry name" value="Transl_elong_KOW-like"/>
</dbReference>
<dbReference type="InterPro" id="IPR001059">
    <property type="entry name" value="Transl_elong_P/YeiP_cen"/>
</dbReference>
<dbReference type="InterPro" id="IPR013852">
    <property type="entry name" value="Transl_elong_P/YeiP_CS"/>
</dbReference>
<dbReference type="InterPro" id="IPR011768">
    <property type="entry name" value="Transl_elongation_fac_P"/>
</dbReference>
<dbReference type="InterPro" id="IPR008991">
    <property type="entry name" value="Translation_prot_SH3-like_sf"/>
</dbReference>
<dbReference type="NCBIfam" id="TIGR00038">
    <property type="entry name" value="efp"/>
    <property type="match status" value="1"/>
</dbReference>
<dbReference type="NCBIfam" id="NF001810">
    <property type="entry name" value="PRK00529.1"/>
    <property type="match status" value="1"/>
</dbReference>
<dbReference type="PANTHER" id="PTHR30053">
    <property type="entry name" value="ELONGATION FACTOR P"/>
    <property type="match status" value="1"/>
</dbReference>
<dbReference type="PANTHER" id="PTHR30053:SF12">
    <property type="entry name" value="ELONGATION FACTOR P (EF-P) FAMILY PROTEIN"/>
    <property type="match status" value="1"/>
</dbReference>
<dbReference type="Pfam" id="PF01132">
    <property type="entry name" value="EFP"/>
    <property type="match status" value="1"/>
</dbReference>
<dbReference type="Pfam" id="PF08207">
    <property type="entry name" value="EFP_N"/>
    <property type="match status" value="1"/>
</dbReference>
<dbReference type="Pfam" id="PF09285">
    <property type="entry name" value="Elong-fact-P_C"/>
    <property type="match status" value="1"/>
</dbReference>
<dbReference type="PIRSF" id="PIRSF005901">
    <property type="entry name" value="EF-P"/>
    <property type="match status" value="1"/>
</dbReference>
<dbReference type="SMART" id="SM01185">
    <property type="entry name" value="EFP"/>
    <property type="match status" value="1"/>
</dbReference>
<dbReference type="SMART" id="SM00841">
    <property type="entry name" value="Elong-fact-P_C"/>
    <property type="match status" value="1"/>
</dbReference>
<dbReference type="SUPFAM" id="SSF50249">
    <property type="entry name" value="Nucleic acid-binding proteins"/>
    <property type="match status" value="2"/>
</dbReference>
<dbReference type="SUPFAM" id="SSF50104">
    <property type="entry name" value="Translation proteins SH3-like domain"/>
    <property type="match status" value="1"/>
</dbReference>
<dbReference type="PROSITE" id="PS01275">
    <property type="entry name" value="EFP"/>
    <property type="match status" value="1"/>
</dbReference>
<organism>
    <name type="scientific">Francisella tularensis subsp. tularensis (strain FSC 198)</name>
    <dbReference type="NCBI Taxonomy" id="393115"/>
    <lineage>
        <taxon>Bacteria</taxon>
        <taxon>Pseudomonadati</taxon>
        <taxon>Pseudomonadota</taxon>
        <taxon>Gammaproteobacteria</taxon>
        <taxon>Thiotrichales</taxon>
        <taxon>Francisellaceae</taxon>
        <taxon>Francisella</taxon>
    </lineage>
</organism>
<sequence length="189" mass="20903">MASYSTNEFKGGLKVLIDGNPMVIVENEFVKPGKGQAFNRVKLKNLLNDRVVEKTFKSGESVEAADVEELTTVYSYFDGDSYVFMHPETFEQYMVSEEALGETKKWLKDQDEYQVILFNGQPISIIAANFVNLEIIETDPGLKGDTAGTGGKPATLSTGAVVRVPLFVQTGEIIKVDTRTSTYVSRVKD</sequence>
<evidence type="ECO:0000255" key="1">
    <source>
        <dbReference type="HAMAP-Rule" id="MF_00141"/>
    </source>
</evidence>
<comment type="function">
    <text evidence="1">Involved in peptide bond synthesis. Alleviates ribosome stalling that occurs when 3 or more consecutive Pro residues or the sequence PPG is present in a protein, possibly by augmenting the peptidyl transferase activity of the ribosome. Modification of Lys-34 is required for alleviation.</text>
</comment>
<comment type="pathway">
    <text evidence="1">Protein biosynthesis; polypeptide chain elongation.</text>
</comment>
<comment type="subcellular location">
    <subcellularLocation>
        <location evidence="1">Cytoplasm</location>
    </subcellularLocation>
</comment>
<comment type="PTM">
    <text evidence="1">May be beta-lysylated on the epsilon-amino group of Lys-34 by the combined action of EpmA and EpmB, and then hydroxylated on the C5 position of the same residue by EpmC (if this protein is present). Lysylation is critical for the stimulatory effect of EF-P on peptide-bond formation. The lysylation moiety may extend toward the peptidyltransferase center and stabilize the terminal 3-CCA end of the tRNA. Hydroxylation of the C5 position on Lys-34 may allow additional potential stabilizing hydrogen-bond interactions with the P-tRNA.</text>
</comment>
<comment type="similarity">
    <text evidence="1">Belongs to the elongation factor P family.</text>
</comment>
<keyword id="KW-0963">Cytoplasm</keyword>
<keyword id="KW-0251">Elongation factor</keyword>
<keyword id="KW-0379">Hydroxylation</keyword>
<keyword id="KW-0648">Protein biosynthesis</keyword>
<protein>
    <recommendedName>
        <fullName evidence="1">Elongation factor P</fullName>
        <shortName evidence="1">EF-P</shortName>
    </recommendedName>
</protein>
<accession>Q14JL2</accession>
<feature type="chain" id="PRO_1000010745" description="Elongation factor P">
    <location>
        <begin position="1"/>
        <end position="189"/>
    </location>
</feature>
<feature type="modified residue" description="N6-(3,6-diaminohexanoyl)-5-hydroxylysine" evidence="1">
    <location>
        <position position="34"/>
    </location>
</feature>